<comment type="function">
    <text evidence="1">Binds 16S rRNA, required for the assembly of 30S particles.</text>
</comment>
<comment type="subunit">
    <text evidence="1">Part of the 30S ribosomal subunit.</text>
</comment>
<comment type="subcellular location">
    <subcellularLocation>
        <location>Plastid</location>
        <location>Chloroplast</location>
    </subcellularLocation>
</comment>
<comment type="similarity">
    <text evidence="1">Belongs to the universal ribosomal protein uS14 family.</text>
</comment>
<geneLocation type="chloroplast"/>
<keyword id="KW-0150">Chloroplast</keyword>
<keyword id="KW-0934">Plastid</keyword>
<keyword id="KW-0687">Ribonucleoprotein</keyword>
<keyword id="KW-0689">Ribosomal protein</keyword>
<keyword id="KW-0694">RNA-binding</keyword>
<keyword id="KW-0699">rRNA-binding</keyword>
<reference key="1">
    <citation type="journal article" date="2008" name="Nucleic Acids Res.">
        <title>The complete nucleotide sequences of the five genetically distinct plastid genomes of Oenothera, subsection Oenothera: I. Sequence evaluation and plastome evolution.</title>
        <authorList>
            <person name="Greiner S."/>
            <person name="Wang X."/>
            <person name="Rauwolf U."/>
            <person name="Silber M.V."/>
            <person name="Mayer K."/>
            <person name="Meurer J."/>
            <person name="Haberer G."/>
            <person name="Herrmann R.G."/>
        </authorList>
    </citation>
    <scope>NUCLEOTIDE SEQUENCE [LARGE SCALE GENOMIC DNA]</scope>
    <source>
        <strain>cv. Douthat 1</strain>
    </source>
</reference>
<organism>
    <name type="scientific">Oenothera argillicola</name>
    <name type="common">Appalachian evening primrose</name>
    <dbReference type="NCBI Taxonomy" id="3940"/>
    <lineage>
        <taxon>Eukaryota</taxon>
        <taxon>Viridiplantae</taxon>
        <taxon>Streptophyta</taxon>
        <taxon>Embryophyta</taxon>
        <taxon>Tracheophyta</taxon>
        <taxon>Spermatophyta</taxon>
        <taxon>Magnoliopsida</taxon>
        <taxon>eudicotyledons</taxon>
        <taxon>Gunneridae</taxon>
        <taxon>Pentapetalae</taxon>
        <taxon>rosids</taxon>
        <taxon>malvids</taxon>
        <taxon>Myrtales</taxon>
        <taxon>Onagraceae</taxon>
        <taxon>Onagroideae</taxon>
        <taxon>Onagreae</taxon>
        <taxon>Oenothera</taxon>
    </lineage>
</organism>
<accession>B0Z4L9</accession>
<gene>
    <name evidence="1" type="primary">rps14</name>
</gene>
<dbReference type="EMBL" id="EU262887">
    <property type="protein sequence ID" value="ABW98697.1"/>
    <property type="molecule type" value="Genomic_DNA"/>
</dbReference>
<dbReference type="RefSeq" id="YP_001687130.1">
    <property type="nucleotide sequence ID" value="NC_010358.2"/>
</dbReference>
<dbReference type="SMR" id="B0Z4L9"/>
<dbReference type="GeneID" id="5951863"/>
<dbReference type="GO" id="GO:0009507">
    <property type="term" value="C:chloroplast"/>
    <property type="evidence" value="ECO:0007669"/>
    <property type="project" value="UniProtKB-SubCell"/>
</dbReference>
<dbReference type="GO" id="GO:0015935">
    <property type="term" value="C:small ribosomal subunit"/>
    <property type="evidence" value="ECO:0007669"/>
    <property type="project" value="TreeGrafter"/>
</dbReference>
<dbReference type="GO" id="GO:0019843">
    <property type="term" value="F:rRNA binding"/>
    <property type="evidence" value="ECO:0007669"/>
    <property type="project" value="UniProtKB-UniRule"/>
</dbReference>
<dbReference type="GO" id="GO:0003735">
    <property type="term" value="F:structural constituent of ribosome"/>
    <property type="evidence" value="ECO:0007669"/>
    <property type="project" value="InterPro"/>
</dbReference>
<dbReference type="GO" id="GO:0006412">
    <property type="term" value="P:translation"/>
    <property type="evidence" value="ECO:0007669"/>
    <property type="project" value="UniProtKB-UniRule"/>
</dbReference>
<dbReference type="FunFam" id="1.10.287.1480:FF:000001">
    <property type="entry name" value="30S ribosomal protein S14"/>
    <property type="match status" value="1"/>
</dbReference>
<dbReference type="Gene3D" id="1.10.287.1480">
    <property type="match status" value="1"/>
</dbReference>
<dbReference type="HAMAP" id="MF_00537">
    <property type="entry name" value="Ribosomal_uS14_1"/>
    <property type="match status" value="1"/>
</dbReference>
<dbReference type="InterPro" id="IPR001209">
    <property type="entry name" value="Ribosomal_uS14"/>
</dbReference>
<dbReference type="InterPro" id="IPR023036">
    <property type="entry name" value="Ribosomal_uS14_bac/plastid"/>
</dbReference>
<dbReference type="InterPro" id="IPR018271">
    <property type="entry name" value="Ribosomal_uS14_CS"/>
</dbReference>
<dbReference type="NCBIfam" id="NF006477">
    <property type="entry name" value="PRK08881.1"/>
    <property type="match status" value="1"/>
</dbReference>
<dbReference type="PANTHER" id="PTHR19836">
    <property type="entry name" value="30S RIBOSOMAL PROTEIN S14"/>
    <property type="match status" value="1"/>
</dbReference>
<dbReference type="PANTHER" id="PTHR19836:SF19">
    <property type="entry name" value="SMALL RIBOSOMAL SUBUNIT PROTEIN US14M"/>
    <property type="match status" value="1"/>
</dbReference>
<dbReference type="Pfam" id="PF00253">
    <property type="entry name" value="Ribosomal_S14"/>
    <property type="match status" value="1"/>
</dbReference>
<dbReference type="SUPFAM" id="SSF57716">
    <property type="entry name" value="Glucocorticoid receptor-like (DNA-binding domain)"/>
    <property type="match status" value="1"/>
</dbReference>
<dbReference type="PROSITE" id="PS00527">
    <property type="entry name" value="RIBOSOMAL_S14"/>
    <property type="match status" value="1"/>
</dbReference>
<protein>
    <recommendedName>
        <fullName evidence="1">Small ribosomal subunit protein uS14c</fullName>
    </recommendedName>
    <alternativeName>
        <fullName evidence="2">30S ribosomal protein S14, chloroplastic</fullName>
    </alternativeName>
</protein>
<name>RR14_OENAR</name>
<sequence length="100" mass="11755">MARKGLIQREKKREKLEQKYRLIRRSSKKEISTAPSLSEKWKIHGKLQSSPRNSAPTRLHRRCFSTGRPRANYRDFRLSGHILREMVHACLLPGATRSSW</sequence>
<proteinExistence type="inferred from homology"/>
<feature type="chain" id="PRO_0000354430" description="Small ribosomal subunit protein uS14c">
    <location>
        <begin position="1"/>
        <end position="100"/>
    </location>
</feature>
<evidence type="ECO:0000255" key="1">
    <source>
        <dbReference type="HAMAP-Rule" id="MF_00537"/>
    </source>
</evidence>
<evidence type="ECO:0000305" key="2"/>